<protein>
    <recommendedName>
        <fullName>Altered inheritance of mitochondria protein 24, mitochondrial</fullName>
    </recommendedName>
</protein>
<dbReference type="EMBL" id="FN393076">
    <property type="protein sequence ID" value="CAY80793.1"/>
    <property type="molecule type" value="Genomic_DNA"/>
</dbReference>
<dbReference type="HOGENOM" id="CLU_057912_0_0_1"/>
<dbReference type="OrthoDB" id="34949at4893"/>
<dbReference type="Proteomes" id="UP000000286">
    <property type="component" value="Chromosome X, Scaffold EC1118_1J19"/>
</dbReference>
<dbReference type="GO" id="GO:0005743">
    <property type="term" value="C:mitochondrial inner membrane"/>
    <property type="evidence" value="ECO:0007669"/>
    <property type="project" value="TreeGrafter"/>
</dbReference>
<dbReference type="GO" id="GO:0007007">
    <property type="term" value="P:inner mitochondrial membrane organization"/>
    <property type="evidence" value="ECO:0007669"/>
    <property type="project" value="TreeGrafter"/>
</dbReference>
<dbReference type="Gene3D" id="3.60.160.10">
    <property type="entry name" value="Mitochondrial biogenesis AIM24"/>
    <property type="match status" value="1"/>
</dbReference>
<dbReference type="InterPro" id="IPR002838">
    <property type="entry name" value="AIM24"/>
</dbReference>
<dbReference type="InterPro" id="IPR036983">
    <property type="entry name" value="AIM24_sf"/>
</dbReference>
<dbReference type="PANTHER" id="PTHR36959">
    <property type="entry name" value="ALTERED INHERITANCE OF MITOCHONDRIA PROTEIN 24, MITOCHONDRIAL"/>
    <property type="match status" value="1"/>
</dbReference>
<dbReference type="PANTHER" id="PTHR36959:SF2">
    <property type="entry name" value="ALTERED INHERITANCE OF MITOCHONDRIA PROTEIN 24, MITOCHONDRIAL"/>
    <property type="match status" value="1"/>
</dbReference>
<dbReference type="Pfam" id="PF01987">
    <property type="entry name" value="AIM24"/>
    <property type="match status" value="1"/>
</dbReference>
<sequence>MISPRVNTRVWQRSISLLSPQAAKTESNVVTKERTYIENLSKDIATSRFRLVDENGKIASITVQPDIPICIKKDCLVSIHNLNHLSLSYKWLNFWSNLIKFRSFKSSLFHRIIGSSVLEILAAPNFQTSRRPFDSSRSLSVLNLTGTKDWNVFGKDSIIAFEQNSSLEIKSPIFPSARSLVSNSSKSQLPRKFQILNGRGNVLVCGGGLVYSIELIDESDKILVNSRNILAINGQSQLDIANSVERQELHVEGAYVGDSSNDTVAPKFIKNQTLKSAYGHTVQFFKRMRSWIRNQYEKRYIYGVDSYFMKIKGPRTILIQTHEMTTSKDNILTKLTSKGHVKKSNVNDNGVNLEKQVANDVNSKIIELANRPSLFIATVSQDGRVDFQSTSKFT</sequence>
<organism>
    <name type="scientific">Saccharomyces cerevisiae (strain Lalvin EC1118 / Prise de mousse)</name>
    <name type="common">Baker's yeast</name>
    <dbReference type="NCBI Taxonomy" id="643680"/>
    <lineage>
        <taxon>Eukaryota</taxon>
        <taxon>Fungi</taxon>
        <taxon>Dikarya</taxon>
        <taxon>Ascomycota</taxon>
        <taxon>Saccharomycotina</taxon>
        <taxon>Saccharomycetes</taxon>
        <taxon>Saccharomycetales</taxon>
        <taxon>Saccharomycetaceae</taxon>
        <taxon>Saccharomyces</taxon>
    </lineage>
</organism>
<gene>
    <name type="primary">AIM24</name>
    <name type="synonym">FMP26</name>
    <name type="ORF">EC1118_1J19_0254g</name>
</gene>
<feature type="transit peptide" description="Mitochondrion" evidence="2">
    <location>
        <begin position="1"/>
        <end position="111"/>
    </location>
</feature>
<feature type="chain" id="PRO_0000399590" description="Altered inheritance of mitochondria protein 24, mitochondrial">
    <location>
        <begin position="112"/>
        <end position="394"/>
    </location>
</feature>
<name>AIM24_YEAS8</name>
<accession>C8ZBM7</accession>
<comment type="subcellular location">
    <subcellularLocation>
        <location evidence="1">Mitochondrion</location>
    </subcellularLocation>
</comment>
<comment type="similarity">
    <text evidence="3">Belongs to the AIM24 family.</text>
</comment>
<reference key="1">
    <citation type="journal article" date="2009" name="Proc. Natl. Acad. Sci. U.S.A.">
        <title>Eukaryote-to-eukaryote gene transfer events revealed by the genome sequence of the wine yeast Saccharomyces cerevisiae EC1118.</title>
        <authorList>
            <person name="Novo M."/>
            <person name="Bigey F."/>
            <person name="Beyne E."/>
            <person name="Galeote V."/>
            <person name="Gavory F."/>
            <person name="Mallet S."/>
            <person name="Cambon B."/>
            <person name="Legras J.-L."/>
            <person name="Wincker P."/>
            <person name="Casaregola S."/>
            <person name="Dequin S."/>
        </authorList>
    </citation>
    <scope>NUCLEOTIDE SEQUENCE [LARGE SCALE GENOMIC DNA]</scope>
    <source>
        <strain>Lalvin EC1118 / Prise de mousse</strain>
    </source>
</reference>
<keyword id="KW-0496">Mitochondrion</keyword>
<keyword id="KW-0809">Transit peptide</keyword>
<evidence type="ECO:0000250" key="1"/>
<evidence type="ECO:0000255" key="2"/>
<evidence type="ECO:0000305" key="3"/>
<proteinExistence type="inferred from homology"/>